<proteinExistence type="inferred from homology"/>
<feature type="chain" id="PRO_1000008883" description="Elongation factor G">
    <location>
        <begin position="1"/>
        <end position="697"/>
    </location>
</feature>
<feature type="domain" description="tr-type G">
    <location>
        <begin position="8"/>
        <end position="283"/>
    </location>
</feature>
<feature type="binding site" evidence="1">
    <location>
        <begin position="17"/>
        <end position="24"/>
    </location>
    <ligand>
        <name>GTP</name>
        <dbReference type="ChEBI" id="CHEBI:37565"/>
    </ligand>
</feature>
<feature type="binding site" evidence="1">
    <location>
        <begin position="81"/>
        <end position="85"/>
    </location>
    <ligand>
        <name>GTP</name>
        <dbReference type="ChEBI" id="CHEBI:37565"/>
    </ligand>
</feature>
<feature type="binding site" evidence="1">
    <location>
        <begin position="135"/>
        <end position="138"/>
    </location>
    <ligand>
        <name>GTP</name>
        <dbReference type="ChEBI" id="CHEBI:37565"/>
    </ligand>
</feature>
<reference key="1">
    <citation type="journal article" date="2009" name="Appl. Environ. Microbiol.">
        <title>Three genomes from the phylum Acidobacteria provide insight into the lifestyles of these microorganisms in soils.</title>
        <authorList>
            <person name="Ward N.L."/>
            <person name="Challacombe J.F."/>
            <person name="Janssen P.H."/>
            <person name="Henrissat B."/>
            <person name="Coutinho P.M."/>
            <person name="Wu M."/>
            <person name="Xie G."/>
            <person name="Haft D.H."/>
            <person name="Sait M."/>
            <person name="Badger J."/>
            <person name="Barabote R.D."/>
            <person name="Bradley B."/>
            <person name="Brettin T.S."/>
            <person name="Brinkac L.M."/>
            <person name="Bruce D."/>
            <person name="Creasy T."/>
            <person name="Daugherty S.C."/>
            <person name="Davidsen T.M."/>
            <person name="DeBoy R.T."/>
            <person name="Detter J.C."/>
            <person name="Dodson R.J."/>
            <person name="Durkin A.S."/>
            <person name="Ganapathy A."/>
            <person name="Gwinn-Giglio M."/>
            <person name="Han C.S."/>
            <person name="Khouri H."/>
            <person name="Kiss H."/>
            <person name="Kothari S.P."/>
            <person name="Madupu R."/>
            <person name="Nelson K.E."/>
            <person name="Nelson W.C."/>
            <person name="Paulsen I."/>
            <person name="Penn K."/>
            <person name="Ren Q."/>
            <person name="Rosovitz M.J."/>
            <person name="Selengut J.D."/>
            <person name="Shrivastava S."/>
            <person name="Sullivan S.A."/>
            <person name="Tapia R."/>
            <person name="Thompson L.S."/>
            <person name="Watkins K.L."/>
            <person name="Yang Q."/>
            <person name="Yu C."/>
            <person name="Zafar N."/>
            <person name="Zhou L."/>
            <person name="Kuske C.R."/>
        </authorList>
    </citation>
    <scope>NUCLEOTIDE SEQUENCE [LARGE SCALE GENOMIC DNA]</scope>
    <source>
        <strain>Ellin6076</strain>
    </source>
</reference>
<protein>
    <recommendedName>
        <fullName evidence="1">Elongation factor G</fullName>
        <shortName evidence="1">EF-G</shortName>
    </recommendedName>
</protein>
<dbReference type="EMBL" id="CP000473">
    <property type="protein sequence ID" value="ABJ86076.1"/>
    <property type="molecule type" value="Genomic_DNA"/>
</dbReference>
<dbReference type="SMR" id="Q01W89"/>
<dbReference type="FunCoup" id="Q01W89">
    <property type="interactions" value="678"/>
</dbReference>
<dbReference type="STRING" id="234267.Acid_5121"/>
<dbReference type="KEGG" id="sus:Acid_5121"/>
<dbReference type="eggNOG" id="COG0480">
    <property type="taxonomic scope" value="Bacteria"/>
</dbReference>
<dbReference type="HOGENOM" id="CLU_002794_4_1_0"/>
<dbReference type="InParanoid" id="Q01W89"/>
<dbReference type="OrthoDB" id="9804431at2"/>
<dbReference type="GO" id="GO:0005737">
    <property type="term" value="C:cytoplasm"/>
    <property type="evidence" value="ECO:0007669"/>
    <property type="project" value="UniProtKB-SubCell"/>
</dbReference>
<dbReference type="GO" id="GO:0005525">
    <property type="term" value="F:GTP binding"/>
    <property type="evidence" value="ECO:0007669"/>
    <property type="project" value="UniProtKB-UniRule"/>
</dbReference>
<dbReference type="GO" id="GO:0003924">
    <property type="term" value="F:GTPase activity"/>
    <property type="evidence" value="ECO:0007669"/>
    <property type="project" value="InterPro"/>
</dbReference>
<dbReference type="GO" id="GO:0003746">
    <property type="term" value="F:translation elongation factor activity"/>
    <property type="evidence" value="ECO:0007669"/>
    <property type="project" value="UniProtKB-UniRule"/>
</dbReference>
<dbReference type="GO" id="GO:0032790">
    <property type="term" value="P:ribosome disassembly"/>
    <property type="evidence" value="ECO:0007669"/>
    <property type="project" value="TreeGrafter"/>
</dbReference>
<dbReference type="CDD" id="cd01886">
    <property type="entry name" value="EF-G"/>
    <property type="match status" value="1"/>
</dbReference>
<dbReference type="CDD" id="cd16262">
    <property type="entry name" value="EFG_III"/>
    <property type="match status" value="1"/>
</dbReference>
<dbReference type="CDD" id="cd01434">
    <property type="entry name" value="EFG_mtEFG1_IV"/>
    <property type="match status" value="1"/>
</dbReference>
<dbReference type="CDD" id="cd03713">
    <property type="entry name" value="EFG_mtEFG_C"/>
    <property type="match status" value="1"/>
</dbReference>
<dbReference type="CDD" id="cd04088">
    <property type="entry name" value="EFG_mtEFG_II"/>
    <property type="match status" value="1"/>
</dbReference>
<dbReference type="FunFam" id="2.40.30.10:FF:000006">
    <property type="entry name" value="Elongation factor G"/>
    <property type="match status" value="1"/>
</dbReference>
<dbReference type="FunFam" id="3.30.230.10:FF:000003">
    <property type="entry name" value="Elongation factor G"/>
    <property type="match status" value="1"/>
</dbReference>
<dbReference type="FunFam" id="3.30.70.240:FF:000001">
    <property type="entry name" value="Elongation factor G"/>
    <property type="match status" value="1"/>
</dbReference>
<dbReference type="FunFam" id="3.30.70.870:FF:000001">
    <property type="entry name" value="Elongation factor G"/>
    <property type="match status" value="1"/>
</dbReference>
<dbReference type="FunFam" id="3.40.50.300:FF:000029">
    <property type="entry name" value="Elongation factor G"/>
    <property type="match status" value="1"/>
</dbReference>
<dbReference type="Gene3D" id="3.30.230.10">
    <property type="match status" value="1"/>
</dbReference>
<dbReference type="Gene3D" id="3.30.70.240">
    <property type="match status" value="1"/>
</dbReference>
<dbReference type="Gene3D" id="3.30.70.870">
    <property type="entry name" value="Elongation Factor G (Translational Gtpase), domain 3"/>
    <property type="match status" value="1"/>
</dbReference>
<dbReference type="Gene3D" id="3.40.50.300">
    <property type="entry name" value="P-loop containing nucleotide triphosphate hydrolases"/>
    <property type="match status" value="1"/>
</dbReference>
<dbReference type="Gene3D" id="2.40.30.10">
    <property type="entry name" value="Translation factors"/>
    <property type="match status" value="1"/>
</dbReference>
<dbReference type="HAMAP" id="MF_00054_B">
    <property type="entry name" value="EF_G_EF_2_B"/>
    <property type="match status" value="1"/>
</dbReference>
<dbReference type="InterPro" id="IPR053905">
    <property type="entry name" value="EF-G-like_DII"/>
</dbReference>
<dbReference type="InterPro" id="IPR041095">
    <property type="entry name" value="EFG_II"/>
</dbReference>
<dbReference type="InterPro" id="IPR009022">
    <property type="entry name" value="EFG_III"/>
</dbReference>
<dbReference type="InterPro" id="IPR035647">
    <property type="entry name" value="EFG_III/V"/>
</dbReference>
<dbReference type="InterPro" id="IPR047872">
    <property type="entry name" value="EFG_IV"/>
</dbReference>
<dbReference type="InterPro" id="IPR035649">
    <property type="entry name" value="EFG_V"/>
</dbReference>
<dbReference type="InterPro" id="IPR000640">
    <property type="entry name" value="EFG_V-like"/>
</dbReference>
<dbReference type="InterPro" id="IPR031157">
    <property type="entry name" value="G_TR_CS"/>
</dbReference>
<dbReference type="InterPro" id="IPR027417">
    <property type="entry name" value="P-loop_NTPase"/>
</dbReference>
<dbReference type="InterPro" id="IPR020568">
    <property type="entry name" value="Ribosomal_Su5_D2-typ_SF"/>
</dbReference>
<dbReference type="InterPro" id="IPR014721">
    <property type="entry name" value="Ribsml_uS5_D2-typ_fold_subgr"/>
</dbReference>
<dbReference type="InterPro" id="IPR005225">
    <property type="entry name" value="Small_GTP-bd"/>
</dbReference>
<dbReference type="InterPro" id="IPR000795">
    <property type="entry name" value="T_Tr_GTP-bd_dom"/>
</dbReference>
<dbReference type="InterPro" id="IPR009000">
    <property type="entry name" value="Transl_B-barrel_sf"/>
</dbReference>
<dbReference type="InterPro" id="IPR004540">
    <property type="entry name" value="Transl_elong_EFG/EF2"/>
</dbReference>
<dbReference type="InterPro" id="IPR005517">
    <property type="entry name" value="Transl_elong_EFG/EF2_IV"/>
</dbReference>
<dbReference type="NCBIfam" id="TIGR00484">
    <property type="entry name" value="EF-G"/>
    <property type="match status" value="1"/>
</dbReference>
<dbReference type="NCBIfam" id="NF009379">
    <property type="entry name" value="PRK12740.1-3"/>
    <property type="match status" value="1"/>
</dbReference>
<dbReference type="NCBIfam" id="NF009381">
    <property type="entry name" value="PRK12740.1-5"/>
    <property type="match status" value="1"/>
</dbReference>
<dbReference type="NCBIfam" id="NF009891">
    <property type="entry name" value="PRK13351.1-1"/>
    <property type="match status" value="1"/>
</dbReference>
<dbReference type="NCBIfam" id="TIGR00231">
    <property type="entry name" value="small_GTP"/>
    <property type="match status" value="1"/>
</dbReference>
<dbReference type="PANTHER" id="PTHR43261:SF1">
    <property type="entry name" value="RIBOSOME-RELEASING FACTOR 2, MITOCHONDRIAL"/>
    <property type="match status" value="1"/>
</dbReference>
<dbReference type="PANTHER" id="PTHR43261">
    <property type="entry name" value="TRANSLATION ELONGATION FACTOR G-RELATED"/>
    <property type="match status" value="1"/>
</dbReference>
<dbReference type="Pfam" id="PF22042">
    <property type="entry name" value="EF-G_D2"/>
    <property type="match status" value="1"/>
</dbReference>
<dbReference type="Pfam" id="PF00679">
    <property type="entry name" value="EFG_C"/>
    <property type="match status" value="1"/>
</dbReference>
<dbReference type="Pfam" id="PF14492">
    <property type="entry name" value="EFG_III"/>
    <property type="match status" value="1"/>
</dbReference>
<dbReference type="Pfam" id="PF03764">
    <property type="entry name" value="EFG_IV"/>
    <property type="match status" value="1"/>
</dbReference>
<dbReference type="Pfam" id="PF00009">
    <property type="entry name" value="GTP_EFTU"/>
    <property type="match status" value="1"/>
</dbReference>
<dbReference type="PRINTS" id="PR00315">
    <property type="entry name" value="ELONGATNFCT"/>
</dbReference>
<dbReference type="SMART" id="SM00838">
    <property type="entry name" value="EFG_C"/>
    <property type="match status" value="1"/>
</dbReference>
<dbReference type="SMART" id="SM00889">
    <property type="entry name" value="EFG_IV"/>
    <property type="match status" value="1"/>
</dbReference>
<dbReference type="SUPFAM" id="SSF54980">
    <property type="entry name" value="EF-G C-terminal domain-like"/>
    <property type="match status" value="2"/>
</dbReference>
<dbReference type="SUPFAM" id="SSF52540">
    <property type="entry name" value="P-loop containing nucleoside triphosphate hydrolases"/>
    <property type="match status" value="1"/>
</dbReference>
<dbReference type="SUPFAM" id="SSF54211">
    <property type="entry name" value="Ribosomal protein S5 domain 2-like"/>
    <property type="match status" value="1"/>
</dbReference>
<dbReference type="SUPFAM" id="SSF50447">
    <property type="entry name" value="Translation proteins"/>
    <property type="match status" value="1"/>
</dbReference>
<dbReference type="PROSITE" id="PS00301">
    <property type="entry name" value="G_TR_1"/>
    <property type="match status" value="1"/>
</dbReference>
<dbReference type="PROSITE" id="PS51722">
    <property type="entry name" value="G_TR_2"/>
    <property type="match status" value="1"/>
</dbReference>
<comment type="function">
    <text evidence="1">Catalyzes the GTP-dependent ribosomal translocation step during translation elongation. During this step, the ribosome changes from the pre-translocational (PRE) to the post-translocational (POST) state as the newly formed A-site-bound peptidyl-tRNA and P-site-bound deacylated tRNA move to the P and E sites, respectively. Catalyzes the coordinated movement of the two tRNA molecules, the mRNA and conformational changes in the ribosome.</text>
</comment>
<comment type="subcellular location">
    <subcellularLocation>
        <location evidence="1">Cytoplasm</location>
    </subcellularLocation>
</comment>
<comment type="similarity">
    <text evidence="1">Belongs to the TRAFAC class translation factor GTPase superfamily. Classic translation factor GTPase family. EF-G/EF-2 subfamily.</text>
</comment>
<keyword id="KW-0963">Cytoplasm</keyword>
<keyword id="KW-0251">Elongation factor</keyword>
<keyword id="KW-0342">GTP-binding</keyword>
<keyword id="KW-0547">Nucleotide-binding</keyword>
<keyword id="KW-0648">Protein biosynthesis</keyword>
<name>EFG_SOLUE</name>
<sequence length="697" mass="77341">MARTTPLERMRNIGIAAHIDAGKTTTTERILFYTGKSHKIGEVHEGTAVMDWMEQEQERGITITSAATTCEWRDIQINIIDTPGHVDFTAEVERSLRVLDGAVAVFDAVAGVQPQSETVWRQADKYSVPRICFINKMDRVGADFYHSVDTIVDRLKCRPVPIQLPIGAEEKFLGIVDLVEMRGIIWRDETMGAKYDVIEIPDDLKDKAKEYREHMIEAISEHDEALMHKFIEGQPISNDEIRAGIRKATIALQIFPVICGTAFKNKGVQTMLDAVVDYLPSPLDVPAIEGLDVDDPEKTLIRHASDNEPFSALVFKIMTDPYVGQLAFFRVYSGSMKSGGSVFNVAKRRNERVGRLLRMHANKREEIQEIFAGDICAAVGLKTISTGDTICDDAHPIVLEAIDFPMPVIQLAVEPKTKADQEKMGMAIQKLAQEDPTFRVYTDPETGQTILSGMGELHLEIIVDRMMREFGVGANVGKPQVAYRETIRKNSEAEGRHVKQTGGHGQYGHVKIRVEPLPSGTGFEFVNDVTGGRIPKEYINPTEMGIKEALEGGILAGYPMSDVKVTLYDGSYHDVDSSEMAFKIAGSMAIKEAAKRAKPVLLEPIMAVEVVVPEDYMGDVIGDLYGRRGRIEGTELRGNTRIIKSMVPLSAMFGYATDIRSRTQGRGSFTMHFGKYEEVPAAQAEEIVSKVQGKTTR</sequence>
<accession>Q01W89</accession>
<gene>
    <name evidence="1" type="primary">fusA</name>
    <name type="ordered locus">Acid_5121</name>
</gene>
<evidence type="ECO:0000255" key="1">
    <source>
        <dbReference type="HAMAP-Rule" id="MF_00054"/>
    </source>
</evidence>
<organism>
    <name type="scientific">Solibacter usitatus (strain Ellin6076)</name>
    <dbReference type="NCBI Taxonomy" id="234267"/>
    <lineage>
        <taxon>Bacteria</taxon>
        <taxon>Pseudomonadati</taxon>
        <taxon>Acidobacteriota</taxon>
        <taxon>Terriglobia</taxon>
        <taxon>Bryobacterales</taxon>
        <taxon>Solibacteraceae</taxon>
        <taxon>Candidatus Solibacter</taxon>
    </lineage>
</organism>